<comment type="function">
    <text evidence="1">Channel that opens in response to stretch forces in the membrane lipid bilayer. May participate in the regulation of osmotic pressure changes within the cell.</text>
</comment>
<comment type="subunit">
    <text evidence="1">Homopentamer.</text>
</comment>
<comment type="subcellular location">
    <subcellularLocation>
        <location evidence="1">Cell membrane</location>
        <topology evidence="1">Multi-pass membrane protein</topology>
    </subcellularLocation>
</comment>
<comment type="similarity">
    <text evidence="1">Belongs to the MscL family.</text>
</comment>
<dbReference type="EMBL" id="CP000517">
    <property type="protein sequence ID" value="ABX26653.1"/>
    <property type="molecule type" value="Genomic_DNA"/>
</dbReference>
<dbReference type="RefSeq" id="WP_012211456.1">
    <property type="nucleotide sequence ID" value="NC_010080.1"/>
</dbReference>
<dbReference type="SMR" id="A8YTR2"/>
<dbReference type="KEGG" id="lhe:lhv_0445"/>
<dbReference type="eggNOG" id="COG1970">
    <property type="taxonomic scope" value="Bacteria"/>
</dbReference>
<dbReference type="HOGENOM" id="CLU_095787_0_0_9"/>
<dbReference type="Proteomes" id="UP000000790">
    <property type="component" value="Chromosome"/>
</dbReference>
<dbReference type="GO" id="GO:0005886">
    <property type="term" value="C:plasma membrane"/>
    <property type="evidence" value="ECO:0007669"/>
    <property type="project" value="UniProtKB-SubCell"/>
</dbReference>
<dbReference type="GO" id="GO:0008381">
    <property type="term" value="F:mechanosensitive monoatomic ion channel activity"/>
    <property type="evidence" value="ECO:0007669"/>
    <property type="project" value="UniProtKB-UniRule"/>
</dbReference>
<dbReference type="Gene3D" id="1.10.1200.120">
    <property type="entry name" value="Large-conductance mechanosensitive channel, MscL, domain 1"/>
    <property type="match status" value="1"/>
</dbReference>
<dbReference type="HAMAP" id="MF_00115">
    <property type="entry name" value="MscL"/>
    <property type="match status" value="1"/>
</dbReference>
<dbReference type="InterPro" id="IPR019823">
    <property type="entry name" value="Mechanosensitive_channel_CS"/>
</dbReference>
<dbReference type="InterPro" id="IPR001185">
    <property type="entry name" value="MS_channel"/>
</dbReference>
<dbReference type="InterPro" id="IPR037673">
    <property type="entry name" value="MSC/AndL"/>
</dbReference>
<dbReference type="InterPro" id="IPR036019">
    <property type="entry name" value="MscL_channel"/>
</dbReference>
<dbReference type="NCBIfam" id="TIGR00220">
    <property type="entry name" value="mscL"/>
    <property type="match status" value="1"/>
</dbReference>
<dbReference type="NCBIfam" id="NF001842">
    <property type="entry name" value="PRK00567.1-3"/>
    <property type="match status" value="1"/>
</dbReference>
<dbReference type="NCBIfam" id="NF001843">
    <property type="entry name" value="PRK00567.1-4"/>
    <property type="match status" value="1"/>
</dbReference>
<dbReference type="PANTHER" id="PTHR30266:SF2">
    <property type="entry name" value="LARGE-CONDUCTANCE MECHANOSENSITIVE CHANNEL"/>
    <property type="match status" value="1"/>
</dbReference>
<dbReference type="PANTHER" id="PTHR30266">
    <property type="entry name" value="MECHANOSENSITIVE CHANNEL MSCL"/>
    <property type="match status" value="1"/>
</dbReference>
<dbReference type="Pfam" id="PF01741">
    <property type="entry name" value="MscL"/>
    <property type="match status" value="1"/>
</dbReference>
<dbReference type="PRINTS" id="PR01264">
    <property type="entry name" value="MECHCHANNEL"/>
</dbReference>
<dbReference type="SUPFAM" id="SSF81330">
    <property type="entry name" value="Gated mechanosensitive channel"/>
    <property type="match status" value="1"/>
</dbReference>
<dbReference type="PROSITE" id="PS01327">
    <property type="entry name" value="MSCL"/>
    <property type="match status" value="1"/>
</dbReference>
<accession>A8YTR2</accession>
<reference key="1">
    <citation type="journal article" date="2008" name="J. Bacteriol.">
        <title>Genome sequence of Lactobacillus helveticus: an organism distinguished by selective gene loss and IS element expansion.</title>
        <authorList>
            <person name="Callanan M."/>
            <person name="Kaleta P."/>
            <person name="O'Callaghan J."/>
            <person name="O'Sullivan O."/>
            <person name="Jordan K."/>
            <person name="McAuliffe O."/>
            <person name="Sangrador-Vegas A."/>
            <person name="Slattery L."/>
            <person name="Fitzgerald G.F."/>
            <person name="Beresford T."/>
            <person name="Ross R.P."/>
        </authorList>
    </citation>
    <scope>NUCLEOTIDE SEQUENCE [LARGE SCALE GENOMIC DNA]</scope>
    <source>
        <strain>DPC 4571</strain>
    </source>
</reference>
<evidence type="ECO:0000255" key="1">
    <source>
        <dbReference type="HAMAP-Rule" id="MF_00115"/>
    </source>
</evidence>
<keyword id="KW-1003">Cell membrane</keyword>
<keyword id="KW-0407">Ion channel</keyword>
<keyword id="KW-0406">Ion transport</keyword>
<keyword id="KW-0472">Membrane</keyword>
<keyword id="KW-0812">Transmembrane</keyword>
<keyword id="KW-1133">Transmembrane helix</keyword>
<keyword id="KW-0813">Transport</keyword>
<proteinExistence type="inferred from homology"/>
<organism>
    <name type="scientific">Lactobacillus helveticus (strain DPC 4571)</name>
    <dbReference type="NCBI Taxonomy" id="405566"/>
    <lineage>
        <taxon>Bacteria</taxon>
        <taxon>Bacillati</taxon>
        <taxon>Bacillota</taxon>
        <taxon>Bacilli</taxon>
        <taxon>Lactobacillales</taxon>
        <taxon>Lactobacillaceae</taxon>
        <taxon>Lactobacillus</taxon>
    </lineage>
</organism>
<feature type="chain" id="PRO_1000071347" description="Large-conductance mechanosensitive channel">
    <location>
        <begin position="1"/>
        <end position="125"/>
    </location>
</feature>
<feature type="transmembrane region" description="Helical" evidence="1">
    <location>
        <begin position="14"/>
        <end position="34"/>
    </location>
</feature>
<feature type="transmembrane region" description="Helical" evidence="1">
    <location>
        <begin position="67"/>
        <end position="87"/>
    </location>
</feature>
<protein>
    <recommendedName>
        <fullName evidence="1">Large-conductance mechanosensitive channel</fullName>
    </recommendedName>
</protein>
<name>MSCL_LACH4</name>
<gene>
    <name evidence="1" type="primary">mscL</name>
    <name type="ordered locus">lhv_0445</name>
</gene>
<sequence>MLKEFKQFIARGNVIDLAVGVIIGAAFTAIVQSLVKNLINPLIGLFIGRIDLSNLTLKVGEANFRYGSFLNSIINFLIISFIVFLIVKAVNKFTKKEEEETPAAPTETDYLKEIRDLLKEKRSIK</sequence>